<keyword id="KW-0963">Cytoplasm</keyword>
<keyword id="KW-0441">Lipid A biosynthesis</keyword>
<keyword id="KW-0444">Lipid biosynthesis</keyword>
<keyword id="KW-0443">Lipid metabolism</keyword>
<keyword id="KW-0456">Lyase</keyword>
<organism>
    <name type="scientific">Staphylococcus aureus (strain Mu50 / ATCC 700699)</name>
    <dbReference type="NCBI Taxonomy" id="158878"/>
    <lineage>
        <taxon>Bacteria</taxon>
        <taxon>Bacillati</taxon>
        <taxon>Bacillota</taxon>
        <taxon>Bacilli</taxon>
        <taxon>Bacillales</taxon>
        <taxon>Staphylococcaceae</taxon>
        <taxon>Staphylococcus</taxon>
    </lineage>
</organism>
<accession>P64107</accession>
<accession>Q99SF9</accession>
<protein>
    <recommendedName>
        <fullName evidence="1">3-hydroxyacyl-[acyl-carrier-protein] dehydratase FabZ</fullName>
        <ecNumber evidence="1">4.2.1.59</ecNumber>
    </recommendedName>
    <alternativeName>
        <fullName evidence="1">(3R)-hydroxymyristoyl-[acyl-carrier-protein] dehydratase</fullName>
        <shortName evidence="1">(3R)-hydroxymyristoyl-ACP dehydrase</shortName>
    </alternativeName>
    <alternativeName>
        <fullName evidence="1">Beta-hydroxyacyl-ACP dehydratase</fullName>
    </alternativeName>
</protein>
<evidence type="ECO:0000255" key="1">
    <source>
        <dbReference type="HAMAP-Rule" id="MF_00406"/>
    </source>
</evidence>
<gene>
    <name evidence="1" type="primary">fabZ</name>
    <name type="ordered locus">SAV2098</name>
</gene>
<dbReference type="EC" id="4.2.1.59" evidence="1"/>
<dbReference type="EMBL" id="BA000017">
    <property type="protein sequence ID" value="BAB58260.1"/>
    <property type="molecule type" value="Genomic_DNA"/>
</dbReference>
<dbReference type="RefSeq" id="WP_000447678.1">
    <property type="nucleotide sequence ID" value="NC_002758.2"/>
</dbReference>
<dbReference type="SMR" id="P64107"/>
<dbReference type="KEGG" id="sav:SAV2098"/>
<dbReference type="HOGENOM" id="CLU_078912_3_0_9"/>
<dbReference type="PhylomeDB" id="P64107"/>
<dbReference type="Proteomes" id="UP000002481">
    <property type="component" value="Chromosome"/>
</dbReference>
<dbReference type="GO" id="GO:0005737">
    <property type="term" value="C:cytoplasm"/>
    <property type="evidence" value="ECO:0007669"/>
    <property type="project" value="UniProtKB-SubCell"/>
</dbReference>
<dbReference type="GO" id="GO:0016020">
    <property type="term" value="C:membrane"/>
    <property type="evidence" value="ECO:0007669"/>
    <property type="project" value="GOC"/>
</dbReference>
<dbReference type="GO" id="GO:0019171">
    <property type="term" value="F:(3R)-hydroxyacyl-[acyl-carrier-protein] dehydratase activity"/>
    <property type="evidence" value="ECO:0007669"/>
    <property type="project" value="UniProtKB-EC"/>
</dbReference>
<dbReference type="GO" id="GO:0006633">
    <property type="term" value="P:fatty acid biosynthetic process"/>
    <property type="evidence" value="ECO:0007669"/>
    <property type="project" value="UniProtKB-UniRule"/>
</dbReference>
<dbReference type="GO" id="GO:0009245">
    <property type="term" value="P:lipid A biosynthetic process"/>
    <property type="evidence" value="ECO:0007669"/>
    <property type="project" value="UniProtKB-UniRule"/>
</dbReference>
<dbReference type="CDD" id="cd01288">
    <property type="entry name" value="FabZ"/>
    <property type="match status" value="1"/>
</dbReference>
<dbReference type="FunFam" id="3.10.129.10:FF:000001">
    <property type="entry name" value="3-hydroxyacyl-[acyl-carrier-protein] dehydratase FabZ"/>
    <property type="match status" value="1"/>
</dbReference>
<dbReference type="Gene3D" id="3.10.129.10">
    <property type="entry name" value="Hotdog Thioesterase"/>
    <property type="match status" value="1"/>
</dbReference>
<dbReference type="HAMAP" id="MF_00406">
    <property type="entry name" value="FabZ"/>
    <property type="match status" value="1"/>
</dbReference>
<dbReference type="InterPro" id="IPR013114">
    <property type="entry name" value="FabA_FabZ"/>
</dbReference>
<dbReference type="InterPro" id="IPR010084">
    <property type="entry name" value="FabZ"/>
</dbReference>
<dbReference type="InterPro" id="IPR029069">
    <property type="entry name" value="HotDog_dom_sf"/>
</dbReference>
<dbReference type="NCBIfam" id="TIGR01750">
    <property type="entry name" value="fabZ"/>
    <property type="match status" value="1"/>
</dbReference>
<dbReference type="NCBIfam" id="NF000582">
    <property type="entry name" value="PRK00006.1"/>
    <property type="match status" value="1"/>
</dbReference>
<dbReference type="PANTHER" id="PTHR30272">
    <property type="entry name" value="3-HYDROXYACYL-[ACYL-CARRIER-PROTEIN] DEHYDRATASE"/>
    <property type="match status" value="1"/>
</dbReference>
<dbReference type="PANTHER" id="PTHR30272:SF1">
    <property type="entry name" value="3-HYDROXYACYL-[ACYL-CARRIER-PROTEIN] DEHYDRATASE"/>
    <property type="match status" value="1"/>
</dbReference>
<dbReference type="Pfam" id="PF07977">
    <property type="entry name" value="FabA"/>
    <property type="match status" value="1"/>
</dbReference>
<dbReference type="SUPFAM" id="SSF54637">
    <property type="entry name" value="Thioesterase/thiol ester dehydrase-isomerase"/>
    <property type="match status" value="1"/>
</dbReference>
<name>FABZ_STAAM</name>
<comment type="function">
    <text evidence="1">Involved in unsaturated fatty acids biosynthesis. Catalyzes the dehydration of short chain beta-hydroxyacyl-ACPs and long chain saturated and unsaturated beta-hydroxyacyl-ACPs.</text>
</comment>
<comment type="catalytic activity">
    <reaction evidence="1">
        <text>a (3R)-hydroxyacyl-[ACP] = a (2E)-enoyl-[ACP] + H2O</text>
        <dbReference type="Rhea" id="RHEA:13097"/>
        <dbReference type="Rhea" id="RHEA-COMP:9925"/>
        <dbReference type="Rhea" id="RHEA-COMP:9945"/>
        <dbReference type="ChEBI" id="CHEBI:15377"/>
        <dbReference type="ChEBI" id="CHEBI:78784"/>
        <dbReference type="ChEBI" id="CHEBI:78827"/>
        <dbReference type="EC" id="4.2.1.59"/>
    </reaction>
</comment>
<comment type="subcellular location">
    <subcellularLocation>
        <location evidence="1">Cytoplasm</location>
    </subcellularLocation>
</comment>
<comment type="similarity">
    <text evidence="1">Belongs to the thioester dehydratase family. FabZ subfamily.</text>
</comment>
<feature type="chain" id="PRO_0000091731" description="3-hydroxyacyl-[acyl-carrier-protein] dehydratase FabZ">
    <location>
        <begin position="1"/>
        <end position="146"/>
    </location>
</feature>
<feature type="active site" evidence="1">
    <location>
        <position position="51"/>
    </location>
</feature>
<proteinExistence type="inferred from homology"/>
<sequence>METIFDYNQIKQIIPHRQPFLLIDKVVEYEEGQRCVAIKQVSGNEPFFQGHFPEYAVMPGVLITEALAQTGAVAILNSEENKGKIALFAGIDKCRFKRQVVPGDTLTLEVEITKIKGPIGKGNAKATVDGQLACSCELTFAIQDVK</sequence>
<reference key="1">
    <citation type="journal article" date="2001" name="Lancet">
        <title>Whole genome sequencing of meticillin-resistant Staphylococcus aureus.</title>
        <authorList>
            <person name="Kuroda M."/>
            <person name="Ohta T."/>
            <person name="Uchiyama I."/>
            <person name="Baba T."/>
            <person name="Yuzawa H."/>
            <person name="Kobayashi I."/>
            <person name="Cui L."/>
            <person name="Oguchi A."/>
            <person name="Aoki K."/>
            <person name="Nagai Y."/>
            <person name="Lian J.-Q."/>
            <person name="Ito T."/>
            <person name="Kanamori M."/>
            <person name="Matsumaru H."/>
            <person name="Maruyama A."/>
            <person name="Murakami H."/>
            <person name="Hosoyama A."/>
            <person name="Mizutani-Ui Y."/>
            <person name="Takahashi N.K."/>
            <person name="Sawano T."/>
            <person name="Inoue R."/>
            <person name="Kaito C."/>
            <person name="Sekimizu K."/>
            <person name="Hirakawa H."/>
            <person name="Kuhara S."/>
            <person name="Goto S."/>
            <person name="Yabuzaki J."/>
            <person name="Kanehisa M."/>
            <person name="Yamashita A."/>
            <person name="Oshima K."/>
            <person name="Furuya K."/>
            <person name="Yoshino C."/>
            <person name="Shiba T."/>
            <person name="Hattori M."/>
            <person name="Ogasawara N."/>
            <person name="Hayashi H."/>
            <person name="Hiramatsu K."/>
        </authorList>
    </citation>
    <scope>NUCLEOTIDE SEQUENCE [LARGE SCALE GENOMIC DNA]</scope>
    <source>
        <strain>Mu50 / ATCC 700699</strain>
    </source>
</reference>